<organism>
    <name type="scientific">Ralstonia nicotianae (strain ATCC BAA-1114 / GMI1000)</name>
    <name type="common">Ralstonia solanacearum</name>
    <dbReference type="NCBI Taxonomy" id="267608"/>
    <lineage>
        <taxon>Bacteria</taxon>
        <taxon>Pseudomonadati</taxon>
        <taxon>Pseudomonadota</taxon>
        <taxon>Betaproteobacteria</taxon>
        <taxon>Burkholderiales</taxon>
        <taxon>Burkholderiaceae</taxon>
        <taxon>Ralstonia</taxon>
        <taxon>Ralstonia solanacearum species complex</taxon>
    </lineage>
</organism>
<feature type="chain" id="PRO_0000146293" description="Small ribosomal subunit protein uS12">
    <location>
        <begin position="1"/>
        <end position="125"/>
    </location>
</feature>
<feature type="modified residue" description="3-methylthioaspartic acid" evidence="1">
    <location>
        <position position="89"/>
    </location>
</feature>
<keyword id="KW-0488">Methylation</keyword>
<keyword id="KW-1185">Reference proteome</keyword>
<keyword id="KW-0687">Ribonucleoprotein</keyword>
<keyword id="KW-0689">Ribosomal protein</keyword>
<keyword id="KW-0694">RNA-binding</keyword>
<keyword id="KW-0699">rRNA-binding</keyword>
<keyword id="KW-0820">tRNA-binding</keyword>
<gene>
    <name evidence="2" type="primary">rpsL</name>
    <name type="ordered locus">RSc3024</name>
    <name type="ORF">RS04733</name>
</gene>
<accession>Q8XV08</accession>
<dbReference type="EMBL" id="AL646052">
    <property type="protein sequence ID" value="CAD16733.1"/>
    <property type="molecule type" value="Genomic_DNA"/>
</dbReference>
<dbReference type="RefSeq" id="WP_003265519.1">
    <property type="nucleotide sequence ID" value="NC_003295.1"/>
</dbReference>
<dbReference type="SMR" id="Q8XV08"/>
<dbReference type="STRING" id="267608.RSc3024"/>
<dbReference type="EnsemblBacteria" id="CAD16733">
    <property type="protein sequence ID" value="CAD16733"/>
    <property type="gene ID" value="RSc3024"/>
</dbReference>
<dbReference type="GeneID" id="97319843"/>
<dbReference type="KEGG" id="rso:RSc3024"/>
<dbReference type="eggNOG" id="COG0048">
    <property type="taxonomic scope" value="Bacteria"/>
</dbReference>
<dbReference type="HOGENOM" id="CLU_104295_1_2_4"/>
<dbReference type="Proteomes" id="UP000001436">
    <property type="component" value="Chromosome"/>
</dbReference>
<dbReference type="GO" id="GO:0015935">
    <property type="term" value="C:small ribosomal subunit"/>
    <property type="evidence" value="ECO:0007669"/>
    <property type="project" value="InterPro"/>
</dbReference>
<dbReference type="GO" id="GO:0019843">
    <property type="term" value="F:rRNA binding"/>
    <property type="evidence" value="ECO:0007669"/>
    <property type="project" value="UniProtKB-UniRule"/>
</dbReference>
<dbReference type="GO" id="GO:0003735">
    <property type="term" value="F:structural constituent of ribosome"/>
    <property type="evidence" value="ECO:0007669"/>
    <property type="project" value="InterPro"/>
</dbReference>
<dbReference type="GO" id="GO:0000049">
    <property type="term" value="F:tRNA binding"/>
    <property type="evidence" value="ECO:0007669"/>
    <property type="project" value="UniProtKB-UniRule"/>
</dbReference>
<dbReference type="GO" id="GO:0006412">
    <property type="term" value="P:translation"/>
    <property type="evidence" value="ECO:0007669"/>
    <property type="project" value="UniProtKB-UniRule"/>
</dbReference>
<dbReference type="CDD" id="cd03368">
    <property type="entry name" value="Ribosomal_S12"/>
    <property type="match status" value="1"/>
</dbReference>
<dbReference type="FunFam" id="2.40.50.140:FF:000001">
    <property type="entry name" value="30S ribosomal protein S12"/>
    <property type="match status" value="1"/>
</dbReference>
<dbReference type="Gene3D" id="2.40.50.140">
    <property type="entry name" value="Nucleic acid-binding proteins"/>
    <property type="match status" value="1"/>
</dbReference>
<dbReference type="HAMAP" id="MF_00403_B">
    <property type="entry name" value="Ribosomal_uS12_B"/>
    <property type="match status" value="1"/>
</dbReference>
<dbReference type="InterPro" id="IPR012340">
    <property type="entry name" value="NA-bd_OB-fold"/>
</dbReference>
<dbReference type="InterPro" id="IPR006032">
    <property type="entry name" value="Ribosomal_uS12"/>
</dbReference>
<dbReference type="InterPro" id="IPR005679">
    <property type="entry name" value="Ribosomal_uS12_bac"/>
</dbReference>
<dbReference type="NCBIfam" id="TIGR00981">
    <property type="entry name" value="rpsL_bact"/>
    <property type="match status" value="1"/>
</dbReference>
<dbReference type="PANTHER" id="PTHR11652">
    <property type="entry name" value="30S RIBOSOMAL PROTEIN S12 FAMILY MEMBER"/>
    <property type="match status" value="1"/>
</dbReference>
<dbReference type="Pfam" id="PF00164">
    <property type="entry name" value="Ribosom_S12_S23"/>
    <property type="match status" value="1"/>
</dbReference>
<dbReference type="PIRSF" id="PIRSF002133">
    <property type="entry name" value="Ribosomal_S12/S23"/>
    <property type="match status" value="1"/>
</dbReference>
<dbReference type="PRINTS" id="PR01034">
    <property type="entry name" value="RIBOSOMALS12"/>
</dbReference>
<dbReference type="SUPFAM" id="SSF50249">
    <property type="entry name" value="Nucleic acid-binding proteins"/>
    <property type="match status" value="1"/>
</dbReference>
<dbReference type="PROSITE" id="PS00055">
    <property type="entry name" value="RIBOSOMAL_S12"/>
    <property type="match status" value="1"/>
</dbReference>
<reference key="1">
    <citation type="journal article" date="2002" name="Nature">
        <title>Genome sequence of the plant pathogen Ralstonia solanacearum.</title>
        <authorList>
            <person name="Salanoubat M."/>
            <person name="Genin S."/>
            <person name="Artiguenave F."/>
            <person name="Gouzy J."/>
            <person name="Mangenot S."/>
            <person name="Arlat M."/>
            <person name="Billault A."/>
            <person name="Brottier P."/>
            <person name="Camus J.-C."/>
            <person name="Cattolico L."/>
            <person name="Chandler M."/>
            <person name="Choisne N."/>
            <person name="Claudel-Renard C."/>
            <person name="Cunnac S."/>
            <person name="Demange N."/>
            <person name="Gaspin C."/>
            <person name="Lavie M."/>
            <person name="Moisan A."/>
            <person name="Robert C."/>
            <person name="Saurin W."/>
            <person name="Schiex T."/>
            <person name="Siguier P."/>
            <person name="Thebault P."/>
            <person name="Whalen M."/>
            <person name="Wincker P."/>
            <person name="Levy M."/>
            <person name="Weissenbach J."/>
            <person name="Boucher C.A."/>
        </authorList>
    </citation>
    <scope>NUCLEOTIDE SEQUENCE [LARGE SCALE GENOMIC DNA]</scope>
    <source>
        <strain>ATCC BAA-1114 / GMI1000</strain>
    </source>
</reference>
<protein>
    <recommendedName>
        <fullName evidence="2">Small ribosomal subunit protein uS12</fullName>
    </recommendedName>
    <alternativeName>
        <fullName evidence="3">30S ribosomal protein S12</fullName>
    </alternativeName>
</protein>
<sequence length="125" mass="13941">MPTINQLVRKPRVSEKLKSKSPALENCPQRRGVCTRVYTTTPKKPNSALRKVAKVRLTNGFEVISYIGGEGHNLQEHSVVLIRGGRVKDLPGVRYHIVRGSLDLQGVKDRKQARSKYGAKRPKAA</sequence>
<comment type="function">
    <text evidence="2">With S4 and S5 plays an important role in translational accuracy.</text>
</comment>
<comment type="function">
    <text evidence="2">Interacts with and stabilizes bases of the 16S rRNA that are involved in tRNA selection in the A site and with the mRNA backbone. Located at the interface of the 30S and 50S subunits, it traverses the body of the 30S subunit contacting proteins on the other side and probably holding the rRNA structure together. The combined cluster of proteins S8, S12 and S17 appears to hold together the shoulder and platform of the 30S subunit.</text>
</comment>
<comment type="subunit">
    <text evidence="2">Part of the 30S ribosomal subunit. Contacts proteins S8 and S17. May interact with IF1 in the 30S initiation complex.</text>
</comment>
<comment type="similarity">
    <text evidence="2">Belongs to the universal ribosomal protein uS12 family.</text>
</comment>
<proteinExistence type="inferred from homology"/>
<evidence type="ECO:0000250" key="1"/>
<evidence type="ECO:0000255" key="2">
    <source>
        <dbReference type="HAMAP-Rule" id="MF_00403"/>
    </source>
</evidence>
<evidence type="ECO:0000305" key="3"/>
<name>RS12_RALN1</name>